<accession>A6X0C7</accession>
<sequence length="80" mass="9117">MPKRVLQGVVVSDKNDKTVVVKVERRYSHPLLQKTVRQSKKYKAHDENNQFKVGDLVSIQESAPISKDKRWVVLTNEAAG</sequence>
<reference key="1">
    <citation type="journal article" date="2011" name="J. Bacteriol.">
        <title>Genome of Ochrobactrum anthropi ATCC 49188 T, a versatile opportunistic pathogen and symbiont of several eukaryotic hosts.</title>
        <authorList>
            <person name="Chain P.S."/>
            <person name="Lang D.M."/>
            <person name="Comerci D.J."/>
            <person name="Malfatti S.A."/>
            <person name="Vergez L.M."/>
            <person name="Shin M."/>
            <person name="Ugalde R.A."/>
            <person name="Garcia E."/>
            <person name="Tolmasky M.E."/>
        </authorList>
    </citation>
    <scope>NUCLEOTIDE SEQUENCE [LARGE SCALE GENOMIC DNA]</scope>
    <source>
        <strain>ATCC 49188 / DSM 6882 / CCUG 24695 / JCM 21032 / LMG 3331 / NBRC 15819 / NCTC 12168 / Alc 37</strain>
    </source>
</reference>
<dbReference type="EMBL" id="CP000758">
    <property type="protein sequence ID" value="ABS14681.1"/>
    <property type="molecule type" value="Genomic_DNA"/>
</dbReference>
<dbReference type="RefSeq" id="WP_010659919.1">
    <property type="nucleotide sequence ID" value="NC_009667.1"/>
</dbReference>
<dbReference type="SMR" id="A6X0C7"/>
<dbReference type="STRING" id="439375.Oant_1965"/>
<dbReference type="GeneID" id="61317577"/>
<dbReference type="KEGG" id="oan:Oant_1965"/>
<dbReference type="eggNOG" id="COG0186">
    <property type="taxonomic scope" value="Bacteria"/>
</dbReference>
<dbReference type="HOGENOM" id="CLU_073626_1_1_5"/>
<dbReference type="Proteomes" id="UP000002301">
    <property type="component" value="Chromosome 1"/>
</dbReference>
<dbReference type="GO" id="GO:0022627">
    <property type="term" value="C:cytosolic small ribosomal subunit"/>
    <property type="evidence" value="ECO:0007669"/>
    <property type="project" value="TreeGrafter"/>
</dbReference>
<dbReference type="GO" id="GO:0019843">
    <property type="term" value="F:rRNA binding"/>
    <property type="evidence" value="ECO:0007669"/>
    <property type="project" value="UniProtKB-UniRule"/>
</dbReference>
<dbReference type="GO" id="GO:0003735">
    <property type="term" value="F:structural constituent of ribosome"/>
    <property type="evidence" value="ECO:0007669"/>
    <property type="project" value="InterPro"/>
</dbReference>
<dbReference type="GO" id="GO:0006412">
    <property type="term" value="P:translation"/>
    <property type="evidence" value="ECO:0007669"/>
    <property type="project" value="UniProtKB-UniRule"/>
</dbReference>
<dbReference type="CDD" id="cd00364">
    <property type="entry name" value="Ribosomal_uS17"/>
    <property type="match status" value="1"/>
</dbReference>
<dbReference type="Gene3D" id="2.40.50.140">
    <property type="entry name" value="Nucleic acid-binding proteins"/>
    <property type="match status" value="1"/>
</dbReference>
<dbReference type="HAMAP" id="MF_01345_B">
    <property type="entry name" value="Ribosomal_uS17_B"/>
    <property type="match status" value="1"/>
</dbReference>
<dbReference type="InterPro" id="IPR012340">
    <property type="entry name" value="NA-bd_OB-fold"/>
</dbReference>
<dbReference type="InterPro" id="IPR000266">
    <property type="entry name" value="Ribosomal_uS17"/>
</dbReference>
<dbReference type="InterPro" id="IPR019984">
    <property type="entry name" value="Ribosomal_uS17_bact/chlr"/>
</dbReference>
<dbReference type="NCBIfam" id="NF004123">
    <property type="entry name" value="PRK05610.1"/>
    <property type="match status" value="1"/>
</dbReference>
<dbReference type="NCBIfam" id="TIGR03635">
    <property type="entry name" value="uS17_bact"/>
    <property type="match status" value="1"/>
</dbReference>
<dbReference type="PANTHER" id="PTHR10744">
    <property type="entry name" value="40S RIBOSOMAL PROTEIN S11 FAMILY MEMBER"/>
    <property type="match status" value="1"/>
</dbReference>
<dbReference type="PANTHER" id="PTHR10744:SF1">
    <property type="entry name" value="SMALL RIBOSOMAL SUBUNIT PROTEIN US17M"/>
    <property type="match status" value="1"/>
</dbReference>
<dbReference type="Pfam" id="PF00366">
    <property type="entry name" value="Ribosomal_S17"/>
    <property type="match status" value="1"/>
</dbReference>
<dbReference type="PRINTS" id="PR00973">
    <property type="entry name" value="RIBOSOMALS17"/>
</dbReference>
<dbReference type="SUPFAM" id="SSF50249">
    <property type="entry name" value="Nucleic acid-binding proteins"/>
    <property type="match status" value="1"/>
</dbReference>
<keyword id="KW-1185">Reference proteome</keyword>
<keyword id="KW-0687">Ribonucleoprotein</keyword>
<keyword id="KW-0689">Ribosomal protein</keyword>
<keyword id="KW-0694">RNA-binding</keyword>
<keyword id="KW-0699">rRNA-binding</keyword>
<comment type="function">
    <text evidence="1">One of the primary rRNA binding proteins, it binds specifically to the 5'-end of 16S ribosomal RNA.</text>
</comment>
<comment type="subunit">
    <text evidence="1">Part of the 30S ribosomal subunit.</text>
</comment>
<comment type="similarity">
    <text evidence="1">Belongs to the universal ribosomal protein uS17 family.</text>
</comment>
<name>RS17_BRUA4</name>
<evidence type="ECO:0000255" key="1">
    <source>
        <dbReference type="HAMAP-Rule" id="MF_01345"/>
    </source>
</evidence>
<evidence type="ECO:0000305" key="2"/>
<proteinExistence type="inferred from homology"/>
<protein>
    <recommendedName>
        <fullName evidence="1">Small ribosomal subunit protein uS17</fullName>
    </recommendedName>
    <alternativeName>
        <fullName evidence="2">30S ribosomal protein S17</fullName>
    </alternativeName>
</protein>
<gene>
    <name evidence="1" type="primary">rpsQ</name>
    <name type="ordered locus">Oant_1965</name>
</gene>
<organism>
    <name type="scientific">Brucella anthropi (strain ATCC 49188 / DSM 6882 / CCUG 24695 / JCM 21032 / LMG 3331 / NBRC 15819 / NCTC 12168 / Alc 37)</name>
    <name type="common">Ochrobactrum anthropi</name>
    <dbReference type="NCBI Taxonomy" id="439375"/>
    <lineage>
        <taxon>Bacteria</taxon>
        <taxon>Pseudomonadati</taxon>
        <taxon>Pseudomonadota</taxon>
        <taxon>Alphaproteobacteria</taxon>
        <taxon>Hyphomicrobiales</taxon>
        <taxon>Brucellaceae</taxon>
        <taxon>Brucella/Ochrobactrum group</taxon>
        <taxon>Brucella</taxon>
    </lineage>
</organism>
<feature type="chain" id="PRO_1000054985" description="Small ribosomal subunit protein uS17">
    <location>
        <begin position="1"/>
        <end position="80"/>
    </location>
</feature>